<accession>B0VD55</accession>
<dbReference type="EMBL" id="CU459141">
    <property type="protein sequence ID" value="CAM86902.1"/>
    <property type="molecule type" value="Genomic_DNA"/>
</dbReference>
<dbReference type="RefSeq" id="WP_001196578.1">
    <property type="nucleotide sequence ID" value="NZ_JBDGFB010000001.1"/>
</dbReference>
<dbReference type="SMR" id="B0VD55"/>
<dbReference type="EnsemblBacteria" id="CAM86902">
    <property type="protein sequence ID" value="CAM86902"/>
    <property type="gene ID" value="ABAYE2025"/>
</dbReference>
<dbReference type="KEGG" id="aby:ABAYE2025"/>
<dbReference type="HOGENOM" id="CLU_005965_2_3_6"/>
<dbReference type="GO" id="GO:0005524">
    <property type="term" value="F:ATP binding"/>
    <property type="evidence" value="ECO:0007669"/>
    <property type="project" value="UniProtKB-KW"/>
</dbReference>
<dbReference type="GO" id="GO:0016887">
    <property type="term" value="F:ATP hydrolysis activity"/>
    <property type="evidence" value="ECO:0007669"/>
    <property type="project" value="UniProtKB-UniRule"/>
</dbReference>
<dbReference type="GO" id="GO:0140662">
    <property type="term" value="F:ATP-dependent protein folding chaperone"/>
    <property type="evidence" value="ECO:0007669"/>
    <property type="project" value="InterPro"/>
</dbReference>
<dbReference type="GO" id="GO:0051082">
    <property type="term" value="F:unfolded protein binding"/>
    <property type="evidence" value="ECO:0007669"/>
    <property type="project" value="InterPro"/>
</dbReference>
<dbReference type="GO" id="GO:0016226">
    <property type="term" value="P:iron-sulfur cluster assembly"/>
    <property type="evidence" value="ECO:0007669"/>
    <property type="project" value="InterPro"/>
</dbReference>
<dbReference type="CDD" id="cd10236">
    <property type="entry name" value="ASKHA_NBD_HSP70_HscA"/>
    <property type="match status" value="1"/>
</dbReference>
<dbReference type="FunFam" id="3.30.420.40:FF:000046">
    <property type="entry name" value="Chaperone protein HscA"/>
    <property type="match status" value="1"/>
</dbReference>
<dbReference type="Gene3D" id="1.20.1270.10">
    <property type="match status" value="1"/>
</dbReference>
<dbReference type="Gene3D" id="3.30.420.40">
    <property type="match status" value="2"/>
</dbReference>
<dbReference type="Gene3D" id="3.90.640.10">
    <property type="entry name" value="Actin, Chain A, domain 4"/>
    <property type="match status" value="1"/>
</dbReference>
<dbReference type="Gene3D" id="2.60.34.10">
    <property type="entry name" value="Substrate Binding Domain Of DNAk, Chain A, domain 1"/>
    <property type="match status" value="1"/>
</dbReference>
<dbReference type="HAMAP" id="MF_00679">
    <property type="entry name" value="HscA"/>
    <property type="match status" value="1"/>
</dbReference>
<dbReference type="InterPro" id="IPR043129">
    <property type="entry name" value="ATPase_NBD"/>
</dbReference>
<dbReference type="InterPro" id="IPR018181">
    <property type="entry name" value="Heat_shock_70_CS"/>
</dbReference>
<dbReference type="InterPro" id="IPR042039">
    <property type="entry name" value="HscA_NBD"/>
</dbReference>
<dbReference type="InterPro" id="IPR029048">
    <property type="entry name" value="HSP70_C_sf"/>
</dbReference>
<dbReference type="InterPro" id="IPR029047">
    <property type="entry name" value="HSP70_peptide-bd_sf"/>
</dbReference>
<dbReference type="InterPro" id="IPR013126">
    <property type="entry name" value="Hsp_70_fam"/>
</dbReference>
<dbReference type="InterPro" id="IPR010236">
    <property type="entry name" value="ISC_FeS_clus_asmbl_HscA"/>
</dbReference>
<dbReference type="NCBIfam" id="TIGR01991">
    <property type="entry name" value="HscA"/>
    <property type="match status" value="1"/>
</dbReference>
<dbReference type="NCBIfam" id="NF003520">
    <property type="entry name" value="PRK05183.1"/>
    <property type="match status" value="1"/>
</dbReference>
<dbReference type="PANTHER" id="PTHR19375">
    <property type="entry name" value="HEAT SHOCK PROTEIN 70KDA"/>
    <property type="match status" value="1"/>
</dbReference>
<dbReference type="Pfam" id="PF00012">
    <property type="entry name" value="HSP70"/>
    <property type="match status" value="1"/>
</dbReference>
<dbReference type="PRINTS" id="PR00301">
    <property type="entry name" value="HEATSHOCK70"/>
</dbReference>
<dbReference type="SUPFAM" id="SSF53067">
    <property type="entry name" value="Actin-like ATPase domain"/>
    <property type="match status" value="2"/>
</dbReference>
<dbReference type="SUPFAM" id="SSF100934">
    <property type="entry name" value="Heat shock protein 70kD (HSP70), C-terminal subdomain"/>
    <property type="match status" value="1"/>
</dbReference>
<dbReference type="SUPFAM" id="SSF100920">
    <property type="entry name" value="Heat shock protein 70kD (HSP70), peptide-binding domain"/>
    <property type="match status" value="1"/>
</dbReference>
<dbReference type="PROSITE" id="PS00297">
    <property type="entry name" value="HSP70_1"/>
    <property type="match status" value="1"/>
</dbReference>
<dbReference type="PROSITE" id="PS00329">
    <property type="entry name" value="HSP70_2"/>
    <property type="match status" value="1"/>
</dbReference>
<comment type="function">
    <text evidence="1">Chaperone involved in the maturation of iron-sulfur cluster-containing proteins. Has a low intrinsic ATPase activity which is markedly stimulated by HscB.</text>
</comment>
<comment type="similarity">
    <text evidence="1">Belongs to the heat shock protein 70 family.</text>
</comment>
<evidence type="ECO:0000255" key="1">
    <source>
        <dbReference type="HAMAP-Rule" id="MF_00679"/>
    </source>
</evidence>
<keyword id="KW-0067">ATP-binding</keyword>
<keyword id="KW-0143">Chaperone</keyword>
<keyword id="KW-0547">Nucleotide-binding</keyword>
<keyword id="KW-0346">Stress response</keyword>
<reference key="1">
    <citation type="journal article" date="2008" name="PLoS ONE">
        <title>Comparative analysis of Acinetobacters: three genomes for three lifestyles.</title>
        <authorList>
            <person name="Vallenet D."/>
            <person name="Nordmann P."/>
            <person name="Barbe V."/>
            <person name="Poirel L."/>
            <person name="Mangenot S."/>
            <person name="Bataille E."/>
            <person name="Dossat C."/>
            <person name="Gas S."/>
            <person name="Kreimeyer A."/>
            <person name="Lenoble P."/>
            <person name="Oztas S."/>
            <person name="Poulain J."/>
            <person name="Segurens B."/>
            <person name="Robert C."/>
            <person name="Abergel C."/>
            <person name="Claverie J.-M."/>
            <person name="Raoult D."/>
            <person name="Medigue C."/>
            <person name="Weissenbach J."/>
            <person name="Cruveiller S."/>
        </authorList>
    </citation>
    <scope>NUCLEOTIDE SEQUENCE [LARGE SCALE GENOMIC DNA]</scope>
    <source>
        <strain>AYE</strain>
    </source>
</reference>
<gene>
    <name evidence="1" type="primary">hscA</name>
    <name type="ordered locus">ABAYE2025</name>
</gene>
<sequence>MALLQIAEPGQSSAPHQHRIAIGIDLGTTHSLVATVLSGKPKVLNDVQNRRLLPSIVHYGDNTTHYGEEAKPFIIADPKNTIVSVKRFMGRSKADIKFQHPYELVGSENEMPAFETRAGRKTPVEISAEILKQLKDRAEDSLQNPVNGAVITVPAYFDEAQRQATRDAAQLAGLNVLRLLNEPTAAAVAYGLDQESNLATDRNYVIYDLGGGTFDVSILRFSQGVFEVLATGGHTALGGDDLDRLIVKWAKKQLNIDVLSDEDYAVFIVAARQAKEQLSTQDSVELKLLEATLTLDRPTFESIIQVALDKTISVCKRVLRDAKLELTDIQNVVLVGGSTRSYAVQKAVREVFAQEPLCTINPDEVVAIGASITANQLIGNSQDGSLLLDVTPLSLGLETMGGLVERLISRNTAIPVARRQEFTTYQDGQTAMLIHVVQGERDLVEHCRSLGRFVLHGIPPMTAGQARIEVTFQVDADGLLTVSAREATSGVQAHIDIKPSYGLSEADTERLLIEGFQHAEEDKNLRHLKETKVEAERELESLEQALKVDADLLDEKQLDALNSAKESLKAQLEGSDIQAIEHAVQQLKVHSDAFAALRMNRHIDHALKGTKLDDWSKSN</sequence>
<feature type="chain" id="PRO_1000131659" description="Chaperone protein HscA homolog">
    <location>
        <begin position="1"/>
        <end position="619"/>
    </location>
</feature>
<name>HSCA_ACIBY</name>
<organism>
    <name type="scientific">Acinetobacter baumannii (strain AYE)</name>
    <dbReference type="NCBI Taxonomy" id="509173"/>
    <lineage>
        <taxon>Bacteria</taxon>
        <taxon>Pseudomonadati</taxon>
        <taxon>Pseudomonadota</taxon>
        <taxon>Gammaproteobacteria</taxon>
        <taxon>Moraxellales</taxon>
        <taxon>Moraxellaceae</taxon>
        <taxon>Acinetobacter</taxon>
        <taxon>Acinetobacter calcoaceticus/baumannii complex</taxon>
    </lineage>
</organism>
<proteinExistence type="inferred from homology"/>
<protein>
    <recommendedName>
        <fullName evidence="1">Chaperone protein HscA homolog</fullName>
    </recommendedName>
</protein>